<sequence length="94" mass="10693">MFTINAEVRKEQGKGASRRLRAANKFPAIIYGGKEAPLAIELDHDKVMNMQAKAEFYSEVLTIVVDGKEIKVKAQDVQRHPYKPKLQHIDFVRA</sequence>
<accession>Q32HY5</accession>
<proteinExistence type="inferred from homology"/>
<reference key="1">
    <citation type="journal article" date="2005" name="Nucleic Acids Res.">
        <title>Genome dynamics and diversity of Shigella species, the etiologic agents of bacillary dysentery.</title>
        <authorList>
            <person name="Yang F."/>
            <person name="Yang J."/>
            <person name="Zhang X."/>
            <person name="Chen L."/>
            <person name="Jiang Y."/>
            <person name="Yan Y."/>
            <person name="Tang X."/>
            <person name="Wang J."/>
            <person name="Xiong Z."/>
            <person name="Dong J."/>
            <person name="Xue Y."/>
            <person name="Zhu Y."/>
            <person name="Xu X."/>
            <person name="Sun L."/>
            <person name="Chen S."/>
            <person name="Nie H."/>
            <person name="Peng J."/>
            <person name="Xu J."/>
            <person name="Wang Y."/>
            <person name="Yuan Z."/>
            <person name="Wen Y."/>
            <person name="Yao Z."/>
            <person name="Shen Y."/>
            <person name="Qiang B."/>
            <person name="Hou Y."/>
            <person name="Yu J."/>
            <person name="Jin Q."/>
        </authorList>
    </citation>
    <scope>NUCLEOTIDE SEQUENCE [LARGE SCALE GENOMIC DNA]</scope>
    <source>
        <strain>Sd197</strain>
    </source>
</reference>
<comment type="function">
    <text evidence="1">This is one of the proteins that binds to the 5S RNA in the ribosome where it forms part of the central protuberance.</text>
</comment>
<comment type="subunit">
    <text evidence="1">Part of the 50S ribosomal subunit; part of the 5S rRNA/L5/L18/L25 subcomplex. Contacts the 5S rRNA. Binds to the 5S rRNA independently of L5 and L18.</text>
</comment>
<comment type="similarity">
    <text evidence="1">Belongs to the bacterial ribosomal protein bL25 family.</text>
</comment>
<feature type="chain" id="PRO_0000243107" description="Large ribosomal subunit protein bL25">
    <location>
        <begin position="1"/>
        <end position="94"/>
    </location>
</feature>
<dbReference type="EMBL" id="CP000034">
    <property type="protein sequence ID" value="ABB61070.1"/>
    <property type="molecule type" value="Genomic_DNA"/>
</dbReference>
<dbReference type="RefSeq" id="WP_000494183.1">
    <property type="nucleotide sequence ID" value="NC_007606.1"/>
</dbReference>
<dbReference type="RefSeq" id="YP_402561.1">
    <property type="nucleotide sequence ID" value="NC_007606.1"/>
</dbReference>
<dbReference type="SMR" id="Q32HY5"/>
<dbReference type="STRING" id="300267.SDY_0894"/>
<dbReference type="EnsemblBacteria" id="ABB61070">
    <property type="protein sequence ID" value="ABB61070"/>
    <property type="gene ID" value="SDY_0894"/>
</dbReference>
<dbReference type="GeneID" id="93774996"/>
<dbReference type="KEGG" id="sdy:SDY_0894"/>
<dbReference type="PATRIC" id="fig|300267.13.peg.1035"/>
<dbReference type="HOGENOM" id="CLU_137946_0_0_6"/>
<dbReference type="Proteomes" id="UP000002716">
    <property type="component" value="Chromosome"/>
</dbReference>
<dbReference type="GO" id="GO:0022625">
    <property type="term" value="C:cytosolic large ribosomal subunit"/>
    <property type="evidence" value="ECO:0007669"/>
    <property type="project" value="TreeGrafter"/>
</dbReference>
<dbReference type="GO" id="GO:0008097">
    <property type="term" value="F:5S rRNA binding"/>
    <property type="evidence" value="ECO:0007669"/>
    <property type="project" value="InterPro"/>
</dbReference>
<dbReference type="GO" id="GO:0003735">
    <property type="term" value="F:structural constituent of ribosome"/>
    <property type="evidence" value="ECO:0007669"/>
    <property type="project" value="InterPro"/>
</dbReference>
<dbReference type="GO" id="GO:0006412">
    <property type="term" value="P:translation"/>
    <property type="evidence" value="ECO:0007669"/>
    <property type="project" value="UniProtKB-UniRule"/>
</dbReference>
<dbReference type="CDD" id="cd00495">
    <property type="entry name" value="Ribosomal_L25_TL5_CTC"/>
    <property type="match status" value="1"/>
</dbReference>
<dbReference type="FunFam" id="2.40.240.10:FF:000002">
    <property type="entry name" value="50S ribosomal protein L25"/>
    <property type="match status" value="1"/>
</dbReference>
<dbReference type="Gene3D" id="2.40.240.10">
    <property type="entry name" value="Ribosomal Protein L25, Chain P"/>
    <property type="match status" value="1"/>
</dbReference>
<dbReference type="HAMAP" id="MF_01336">
    <property type="entry name" value="Ribosomal_bL25"/>
    <property type="match status" value="1"/>
</dbReference>
<dbReference type="InterPro" id="IPR020056">
    <property type="entry name" value="Rbsml_bL25/Gln-tRNA_synth_N"/>
</dbReference>
<dbReference type="InterPro" id="IPR011035">
    <property type="entry name" value="Ribosomal_bL25/Gln-tRNA_synth"/>
</dbReference>
<dbReference type="InterPro" id="IPR020055">
    <property type="entry name" value="Ribosomal_bL25_short"/>
</dbReference>
<dbReference type="InterPro" id="IPR029751">
    <property type="entry name" value="Ribosomal_L25_dom"/>
</dbReference>
<dbReference type="InterPro" id="IPR020930">
    <property type="entry name" value="Ribosomal_uL5_bac-type"/>
</dbReference>
<dbReference type="NCBIfam" id="NF004612">
    <property type="entry name" value="PRK05943.1"/>
    <property type="match status" value="1"/>
</dbReference>
<dbReference type="PANTHER" id="PTHR33284">
    <property type="entry name" value="RIBOSOMAL PROTEIN L25/GLN-TRNA SYNTHETASE, ANTI-CODON-BINDING DOMAIN-CONTAINING PROTEIN"/>
    <property type="match status" value="1"/>
</dbReference>
<dbReference type="PANTHER" id="PTHR33284:SF1">
    <property type="entry name" value="RIBOSOMAL PROTEIN L25_GLN-TRNA SYNTHETASE, ANTI-CODON-BINDING DOMAIN-CONTAINING PROTEIN"/>
    <property type="match status" value="1"/>
</dbReference>
<dbReference type="Pfam" id="PF01386">
    <property type="entry name" value="Ribosomal_L25p"/>
    <property type="match status" value="1"/>
</dbReference>
<dbReference type="SUPFAM" id="SSF50715">
    <property type="entry name" value="Ribosomal protein L25-like"/>
    <property type="match status" value="1"/>
</dbReference>
<keyword id="KW-1185">Reference proteome</keyword>
<keyword id="KW-0687">Ribonucleoprotein</keyword>
<keyword id="KW-0689">Ribosomal protein</keyword>
<keyword id="KW-0694">RNA-binding</keyword>
<keyword id="KW-0699">rRNA-binding</keyword>
<gene>
    <name evidence="1" type="primary">rplY</name>
    <name type="ordered locus">SDY_0894</name>
</gene>
<organism>
    <name type="scientific">Shigella dysenteriae serotype 1 (strain Sd197)</name>
    <dbReference type="NCBI Taxonomy" id="300267"/>
    <lineage>
        <taxon>Bacteria</taxon>
        <taxon>Pseudomonadati</taxon>
        <taxon>Pseudomonadota</taxon>
        <taxon>Gammaproteobacteria</taxon>
        <taxon>Enterobacterales</taxon>
        <taxon>Enterobacteriaceae</taxon>
        <taxon>Shigella</taxon>
    </lineage>
</organism>
<evidence type="ECO:0000255" key="1">
    <source>
        <dbReference type="HAMAP-Rule" id="MF_01336"/>
    </source>
</evidence>
<evidence type="ECO:0000305" key="2"/>
<name>RL25_SHIDS</name>
<protein>
    <recommendedName>
        <fullName evidence="1">Large ribosomal subunit protein bL25</fullName>
    </recommendedName>
    <alternativeName>
        <fullName evidence="2">50S ribosomal protein L25</fullName>
    </alternativeName>
</protein>